<accession>Q9HF54</accession>
<dbReference type="EMBL" id="AF210628">
    <property type="protein sequence ID" value="AAG41249.1"/>
    <property type="molecule type" value="Genomic_DNA"/>
</dbReference>
<dbReference type="EMBL" id="AE016815">
    <property type="protein sequence ID" value="AAS50955.1"/>
    <property type="molecule type" value="Genomic_DNA"/>
</dbReference>
<dbReference type="RefSeq" id="NP_983131.1">
    <property type="nucleotide sequence ID" value="NM_208484.1"/>
</dbReference>
<dbReference type="SMR" id="Q9HF54"/>
<dbReference type="FunCoup" id="Q9HF54">
    <property type="interactions" value="812"/>
</dbReference>
<dbReference type="STRING" id="284811.Q9HF54"/>
<dbReference type="EnsemblFungi" id="AAS50955">
    <property type="protein sequence ID" value="AAS50955"/>
    <property type="gene ID" value="AGOS_ABR183W"/>
</dbReference>
<dbReference type="GeneID" id="4619241"/>
<dbReference type="KEGG" id="ago:AGOS_ABR183W"/>
<dbReference type="eggNOG" id="KOG0393">
    <property type="taxonomic scope" value="Eukaryota"/>
</dbReference>
<dbReference type="HOGENOM" id="CLU_041217_21_2_1"/>
<dbReference type="InParanoid" id="Q9HF54"/>
<dbReference type="OMA" id="ENVYTKW"/>
<dbReference type="OrthoDB" id="8830751at2759"/>
<dbReference type="Proteomes" id="UP000000591">
    <property type="component" value="Chromosome II"/>
</dbReference>
<dbReference type="GO" id="GO:0005829">
    <property type="term" value="C:cytosol"/>
    <property type="evidence" value="ECO:0000318"/>
    <property type="project" value="GO_Central"/>
</dbReference>
<dbReference type="GO" id="GO:0005886">
    <property type="term" value="C:plasma membrane"/>
    <property type="evidence" value="ECO:0000318"/>
    <property type="project" value="GO_Central"/>
</dbReference>
<dbReference type="GO" id="GO:0005525">
    <property type="term" value="F:GTP binding"/>
    <property type="evidence" value="ECO:0000318"/>
    <property type="project" value="GO_Central"/>
</dbReference>
<dbReference type="GO" id="GO:0003924">
    <property type="term" value="F:GTPase activity"/>
    <property type="evidence" value="ECO:0000318"/>
    <property type="project" value="GO_Central"/>
</dbReference>
<dbReference type="GO" id="GO:0019901">
    <property type="term" value="F:protein kinase binding"/>
    <property type="evidence" value="ECO:0000318"/>
    <property type="project" value="GO_Central"/>
</dbReference>
<dbReference type="GO" id="GO:0007015">
    <property type="term" value="P:actin filament organization"/>
    <property type="evidence" value="ECO:0000318"/>
    <property type="project" value="GO_Central"/>
</dbReference>
<dbReference type="GO" id="GO:0032956">
    <property type="term" value="P:regulation of actin cytoskeleton organization"/>
    <property type="evidence" value="ECO:0000318"/>
    <property type="project" value="GO_Central"/>
</dbReference>
<dbReference type="GO" id="GO:0007165">
    <property type="term" value="P:signal transduction"/>
    <property type="evidence" value="ECO:0000318"/>
    <property type="project" value="GO_Central"/>
</dbReference>
<dbReference type="GO" id="GO:0007264">
    <property type="term" value="P:small GTPase-mediated signal transduction"/>
    <property type="evidence" value="ECO:0007669"/>
    <property type="project" value="InterPro"/>
</dbReference>
<dbReference type="CDD" id="cd01870">
    <property type="entry name" value="RhoA_like"/>
    <property type="match status" value="1"/>
</dbReference>
<dbReference type="FunFam" id="3.40.50.300:FF:000329">
    <property type="entry name" value="GTP-binding protein rhoA"/>
    <property type="match status" value="1"/>
</dbReference>
<dbReference type="Gene3D" id="3.40.50.300">
    <property type="entry name" value="P-loop containing nucleotide triphosphate hydrolases"/>
    <property type="match status" value="1"/>
</dbReference>
<dbReference type="InterPro" id="IPR027417">
    <property type="entry name" value="P-loop_NTPase"/>
</dbReference>
<dbReference type="InterPro" id="IPR005225">
    <property type="entry name" value="Small_GTP-bd"/>
</dbReference>
<dbReference type="InterPro" id="IPR001806">
    <property type="entry name" value="Small_GTPase"/>
</dbReference>
<dbReference type="InterPro" id="IPR003578">
    <property type="entry name" value="Small_GTPase_Rho"/>
</dbReference>
<dbReference type="NCBIfam" id="TIGR00231">
    <property type="entry name" value="small_GTP"/>
    <property type="match status" value="1"/>
</dbReference>
<dbReference type="PANTHER" id="PTHR24072">
    <property type="entry name" value="RHO FAMILY GTPASE"/>
    <property type="match status" value="1"/>
</dbReference>
<dbReference type="Pfam" id="PF00071">
    <property type="entry name" value="Ras"/>
    <property type="match status" value="1"/>
</dbReference>
<dbReference type="PRINTS" id="PR00449">
    <property type="entry name" value="RASTRNSFRMNG"/>
</dbReference>
<dbReference type="SMART" id="SM00175">
    <property type="entry name" value="RAB"/>
    <property type="match status" value="1"/>
</dbReference>
<dbReference type="SMART" id="SM00173">
    <property type="entry name" value="RAS"/>
    <property type="match status" value="1"/>
</dbReference>
<dbReference type="SMART" id="SM00174">
    <property type="entry name" value="RHO"/>
    <property type="match status" value="1"/>
</dbReference>
<dbReference type="SUPFAM" id="SSF52540">
    <property type="entry name" value="P-loop containing nucleoside triphosphate hydrolases"/>
    <property type="match status" value="1"/>
</dbReference>
<dbReference type="PROSITE" id="PS51420">
    <property type="entry name" value="RHO"/>
    <property type="match status" value="1"/>
</dbReference>
<protein>
    <recommendedName>
        <fullName>GTP-binding protein RHO1</fullName>
    </recommendedName>
</protein>
<keyword id="KW-1003">Cell membrane</keyword>
<keyword id="KW-0342">GTP-binding</keyword>
<keyword id="KW-0449">Lipoprotein</keyword>
<keyword id="KW-0472">Membrane</keyword>
<keyword id="KW-0488">Methylation</keyword>
<keyword id="KW-0547">Nucleotide-binding</keyword>
<keyword id="KW-0636">Prenylation</keyword>
<keyword id="KW-1185">Reference proteome</keyword>
<comment type="function">
    <text evidence="3">Involved in the regulation of actin polarization. Rho proteins are required for distinct steps during polarized hyphal growth of A.gossypii.</text>
</comment>
<comment type="subcellular location">
    <subcellularLocation>
        <location evidence="4">Cell membrane</location>
        <topology evidence="4">Lipid-anchor</topology>
        <orientation evidence="4">Cytoplasmic side</orientation>
    </subcellularLocation>
</comment>
<comment type="similarity">
    <text evidence="4">Belongs to the small GTPase superfamily. Rho family.</text>
</comment>
<sequence length="207" mass="23046">MSQQMHNPSIRRKLVIVGDGACGKTCLLIVFAKGKFPQVYVPTVFDNYVADVEVDGRRVELALWDTAGQEDYDRLRPLSYPDSNVVLICYSIDLPDSLENVMEKWISEVLYFCQGVPIILVGCKADLRNDPQVIEQLRQQGQQPVSQAQAQEVADQIGAVEYIECSAKTGFGVREVFEAATRASLMGKQGKSKAKSDKKKKKKCVVL</sequence>
<feature type="chain" id="PRO_0000198932" description="GTP-binding protein RHO1">
    <location>
        <begin position="1"/>
        <end position="204"/>
    </location>
</feature>
<feature type="propeptide" id="PRO_0000281262" description="Removed in mature form" evidence="1">
    <location>
        <begin position="205"/>
        <end position="207"/>
    </location>
</feature>
<feature type="region of interest" description="Disordered" evidence="2">
    <location>
        <begin position="187"/>
        <end position="207"/>
    </location>
</feature>
<feature type="short sequence motif" description="Effector region" evidence="1">
    <location>
        <begin position="40"/>
        <end position="48"/>
    </location>
</feature>
<feature type="compositionally biased region" description="Basic residues" evidence="2">
    <location>
        <begin position="190"/>
        <end position="207"/>
    </location>
</feature>
<feature type="binding site" evidence="1">
    <location>
        <begin position="18"/>
        <end position="25"/>
    </location>
    <ligand>
        <name>GTP</name>
        <dbReference type="ChEBI" id="CHEBI:37565"/>
    </ligand>
</feature>
<feature type="binding site" evidence="1">
    <location>
        <begin position="65"/>
        <end position="69"/>
    </location>
    <ligand>
        <name>GTP</name>
        <dbReference type="ChEBI" id="CHEBI:37565"/>
    </ligand>
</feature>
<feature type="binding site" evidence="1">
    <location>
        <begin position="123"/>
        <end position="126"/>
    </location>
    <ligand>
        <name>GTP</name>
        <dbReference type="ChEBI" id="CHEBI:37565"/>
    </ligand>
</feature>
<feature type="modified residue" description="Cysteine methyl ester" evidence="1">
    <location>
        <position position="204"/>
    </location>
</feature>
<feature type="lipid moiety-binding region" description="S-geranylgeranyl cysteine" evidence="1">
    <location>
        <position position="204"/>
    </location>
</feature>
<evidence type="ECO:0000250" key="1"/>
<evidence type="ECO:0000256" key="2">
    <source>
        <dbReference type="SAM" id="MobiDB-lite"/>
    </source>
</evidence>
<evidence type="ECO:0000269" key="3">
    <source>
    </source>
</evidence>
<evidence type="ECO:0000305" key="4"/>
<organism>
    <name type="scientific">Eremothecium gossypii (strain ATCC 10895 / CBS 109.51 / FGSC 9923 / NRRL Y-1056)</name>
    <name type="common">Yeast</name>
    <name type="synonym">Ashbya gossypii</name>
    <dbReference type="NCBI Taxonomy" id="284811"/>
    <lineage>
        <taxon>Eukaryota</taxon>
        <taxon>Fungi</taxon>
        <taxon>Dikarya</taxon>
        <taxon>Ascomycota</taxon>
        <taxon>Saccharomycotina</taxon>
        <taxon>Saccharomycetes</taxon>
        <taxon>Saccharomycetales</taxon>
        <taxon>Saccharomycetaceae</taxon>
        <taxon>Eremothecium</taxon>
    </lineage>
</organism>
<proteinExistence type="inferred from homology"/>
<name>RHO1_EREGS</name>
<reference key="1">
    <citation type="journal article" date="2001" name="Genetics">
        <title>Cell polarity and hyphal morphogenesis are controlled by multiple rho-protein modules in the filamentous ascomycete Ashbya gossypii.</title>
        <authorList>
            <person name="Wendland J."/>
            <person name="Philippsen P."/>
        </authorList>
    </citation>
    <scope>NUCLEOTIDE SEQUENCE [GENOMIC DNA]</scope>
    <scope>FUNCTION</scope>
</reference>
<reference key="2">
    <citation type="journal article" date="2004" name="Science">
        <title>The Ashbya gossypii genome as a tool for mapping the ancient Saccharomyces cerevisiae genome.</title>
        <authorList>
            <person name="Dietrich F.S."/>
            <person name="Voegeli S."/>
            <person name="Brachat S."/>
            <person name="Lerch A."/>
            <person name="Gates K."/>
            <person name="Steiner S."/>
            <person name="Mohr C."/>
            <person name="Poehlmann R."/>
            <person name="Luedi P."/>
            <person name="Choi S."/>
            <person name="Wing R.A."/>
            <person name="Flavier A."/>
            <person name="Gaffney T.D."/>
            <person name="Philippsen P."/>
        </authorList>
    </citation>
    <scope>NUCLEOTIDE SEQUENCE [LARGE SCALE GENOMIC DNA]</scope>
    <source>
        <strain>ATCC 10895 / CBS 109.51 / FGSC 9923 / NRRL Y-1056</strain>
    </source>
</reference>
<reference key="3">
    <citation type="journal article" date="2013" name="G3 (Bethesda)">
        <title>Genomes of Ashbya fungi isolated from insects reveal four mating-type loci, numerous translocations, lack of transposons, and distinct gene duplications.</title>
        <authorList>
            <person name="Dietrich F.S."/>
            <person name="Voegeli S."/>
            <person name="Kuo S."/>
            <person name="Philippsen P."/>
        </authorList>
    </citation>
    <scope>GENOME REANNOTATION</scope>
    <source>
        <strain>ATCC 10895 / CBS 109.51 / FGSC 9923 / NRRL Y-1056</strain>
    </source>
</reference>
<gene>
    <name type="primary">RHO1</name>
    <name type="ordered locus">ABR183W</name>
</gene>